<protein>
    <recommendedName>
        <fullName evidence="1">Transcription elongation factor GreA</fullName>
    </recommendedName>
    <alternativeName>
        <fullName evidence="1">Transcript cleavage factor GreA</fullName>
    </alternativeName>
</protein>
<reference key="1">
    <citation type="journal article" date="2009" name="Genome Res.">
        <title>Whole genome sequence of Desulfovibrio magneticus strain RS-1 revealed common gene clusters in magnetotactic bacteria.</title>
        <authorList>
            <person name="Nakazawa H."/>
            <person name="Arakaki A."/>
            <person name="Narita-Yamada S."/>
            <person name="Yashiro I."/>
            <person name="Jinno K."/>
            <person name="Aoki N."/>
            <person name="Tsuruyama A."/>
            <person name="Okamura Y."/>
            <person name="Tanikawa S."/>
            <person name="Fujita N."/>
            <person name="Takeyama H."/>
            <person name="Matsunaga T."/>
        </authorList>
    </citation>
    <scope>NUCLEOTIDE SEQUENCE [LARGE SCALE GENOMIC DNA]</scope>
    <source>
        <strain>ATCC 700980 / DSM 13731 / RS-1</strain>
    </source>
</reference>
<organism>
    <name type="scientific">Solidesulfovibrio magneticus (strain ATCC 700980 / DSM 13731 / RS-1)</name>
    <name type="common">Desulfovibrio magneticus</name>
    <dbReference type="NCBI Taxonomy" id="573370"/>
    <lineage>
        <taxon>Bacteria</taxon>
        <taxon>Pseudomonadati</taxon>
        <taxon>Thermodesulfobacteriota</taxon>
        <taxon>Desulfovibrionia</taxon>
        <taxon>Desulfovibrionales</taxon>
        <taxon>Desulfovibrionaceae</taxon>
        <taxon>Solidesulfovibrio</taxon>
    </lineage>
</organism>
<evidence type="ECO:0000255" key="1">
    <source>
        <dbReference type="HAMAP-Rule" id="MF_00105"/>
    </source>
</evidence>
<keyword id="KW-0175">Coiled coil</keyword>
<keyword id="KW-0238">DNA-binding</keyword>
<keyword id="KW-0804">Transcription</keyword>
<keyword id="KW-0805">Transcription regulation</keyword>
<proteinExistence type="inferred from homology"/>
<name>GREA_SOLM1</name>
<comment type="function">
    <text evidence="1">Necessary for efficient RNA polymerase transcription elongation past template-encoded arresting sites. The arresting sites in DNA have the property of trapping a certain fraction of elongating RNA polymerases that pass through, resulting in locked ternary complexes. Cleavage of the nascent transcript by cleavage factors such as GreA or GreB allows the resumption of elongation from the new 3'terminus. GreA releases sequences of 2 to 3 nucleotides.</text>
</comment>
<comment type="similarity">
    <text evidence="1">Belongs to the GreA/GreB family.</text>
</comment>
<dbReference type="EMBL" id="AP010904">
    <property type="protein sequence ID" value="BAH74686.1"/>
    <property type="molecule type" value="Genomic_DNA"/>
</dbReference>
<dbReference type="RefSeq" id="WP_015859909.1">
    <property type="nucleotide sequence ID" value="NC_012796.1"/>
</dbReference>
<dbReference type="SMR" id="C4XLU8"/>
<dbReference type="STRING" id="573370.DMR_11950"/>
<dbReference type="KEGG" id="dma:DMR_11950"/>
<dbReference type="eggNOG" id="COG0782">
    <property type="taxonomic scope" value="Bacteria"/>
</dbReference>
<dbReference type="HOGENOM" id="CLU_101379_2_0_7"/>
<dbReference type="OrthoDB" id="9808774at2"/>
<dbReference type="Proteomes" id="UP000009071">
    <property type="component" value="Chromosome"/>
</dbReference>
<dbReference type="GO" id="GO:0003677">
    <property type="term" value="F:DNA binding"/>
    <property type="evidence" value="ECO:0007669"/>
    <property type="project" value="UniProtKB-UniRule"/>
</dbReference>
<dbReference type="GO" id="GO:0070063">
    <property type="term" value="F:RNA polymerase binding"/>
    <property type="evidence" value="ECO:0007669"/>
    <property type="project" value="InterPro"/>
</dbReference>
<dbReference type="GO" id="GO:0006354">
    <property type="term" value="P:DNA-templated transcription elongation"/>
    <property type="evidence" value="ECO:0007669"/>
    <property type="project" value="TreeGrafter"/>
</dbReference>
<dbReference type="GO" id="GO:0032784">
    <property type="term" value="P:regulation of DNA-templated transcription elongation"/>
    <property type="evidence" value="ECO:0007669"/>
    <property type="project" value="UniProtKB-UniRule"/>
</dbReference>
<dbReference type="FunFam" id="1.10.287.180:FF:000001">
    <property type="entry name" value="Transcription elongation factor GreA"/>
    <property type="match status" value="1"/>
</dbReference>
<dbReference type="FunFam" id="3.10.50.30:FF:000001">
    <property type="entry name" value="Transcription elongation factor GreA"/>
    <property type="match status" value="1"/>
</dbReference>
<dbReference type="Gene3D" id="3.10.50.30">
    <property type="entry name" value="Transcription elongation factor, GreA/GreB, C-terminal domain"/>
    <property type="match status" value="1"/>
</dbReference>
<dbReference type="Gene3D" id="1.10.287.180">
    <property type="entry name" value="Transcription elongation factor, GreA/GreB, N-terminal domain"/>
    <property type="match status" value="1"/>
</dbReference>
<dbReference type="HAMAP" id="MF_00105">
    <property type="entry name" value="GreA_GreB"/>
    <property type="match status" value="1"/>
</dbReference>
<dbReference type="InterPro" id="IPR036953">
    <property type="entry name" value="GreA/GreB_C_sf"/>
</dbReference>
<dbReference type="InterPro" id="IPR018151">
    <property type="entry name" value="TF_GreA/GreB_CS"/>
</dbReference>
<dbReference type="InterPro" id="IPR006359">
    <property type="entry name" value="Tscrpt_elong_fac_GreA"/>
</dbReference>
<dbReference type="InterPro" id="IPR028624">
    <property type="entry name" value="Tscrpt_elong_fac_GreA/B"/>
</dbReference>
<dbReference type="InterPro" id="IPR001437">
    <property type="entry name" value="Tscrpt_elong_fac_GreA/B_C"/>
</dbReference>
<dbReference type="InterPro" id="IPR023459">
    <property type="entry name" value="Tscrpt_elong_fac_GreA/B_fam"/>
</dbReference>
<dbReference type="InterPro" id="IPR022691">
    <property type="entry name" value="Tscrpt_elong_fac_GreA/B_N"/>
</dbReference>
<dbReference type="InterPro" id="IPR036805">
    <property type="entry name" value="Tscrpt_elong_fac_GreA/B_N_sf"/>
</dbReference>
<dbReference type="NCBIfam" id="TIGR01462">
    <property type="entry name" value="greA"/>
    <property type="match status" value="1"/>
</dbReference>
<dbReference type="NCBIfam" id="NF001261">
    <property type="entry name" value="PRK00226.1-2"/>
    <property type="match status" value="1"/>
</dbReference>
<dbReference type="NCBIfam" id="NF001263">
    <property type="entry name" value="PRK00226.1-4"/>
    <property type="match status" value="1"/>
</dbReference>
<dbReference type="PANTHER" id="PTHR30437">
    <property type="entry name" value="TRANSCRIPTION ELONGATION FACTOR GREA"/>
    <property type="match status" value="1"/>
</dbReference>
<dbReference type="PANTHER" id="PTHR30437:SF4">
    <property type="entry name" value="TRANSCRIPTION ELONGATION FACTOR GREA"/>
    <property type="match status" value="1"/>
</dbReference>
<dbReference type="Pfam" id="PF01272">
    <property type="entry name" value="GreA_GreB"/>
    <property type="match status" value="1"/>
</dbReference>
<dbReference type="Pfam" id="PF03449">
    <property type="entry name" value="GreA_GreB_N"/>
    <property type="match status" value="1"/>
</dbReference>
<dbReference type="PIRSF" id="PIRSF006092">
    <property type="entry name" value="GreA_GreB"/>
    <property type="match status" value="1"/>
</dbReference>
<dbReference type="SUPFAM" id="SSF54534">
    <property type="entry name" value="FKBP-like"/>
    <property type="match status" value="1"/>
</dbReference>
<dbReference type="SUPFAM" id="SSF46557">
    <property type="entry name" value="GreA transcript cleavage protein, N-terminal domain"/>
    <property type="match status" value="1"/>
</dbReference>
<dbReference type="PROSITE" id="PS00829">
    <property type="entry name" value="GREAB_1"/>
    <property type="match status" value="1"/>
</dbReference>
<dbReference type="PROSITE" id="PS00830">
    <property type="entry name" value="GREAB_2"/>
    <property type="match status" value="1"/>
</dbReference>
<sequence length="164" mass="17999">MESIPISVEGFRRLERELERLKKERPGVILAIKEAREEGDLRENAGYEAARERQGMLEARINYIESRMSRFNVIDLATLGGEQVIFGATVEIEDVDTGDVKKYTLLGPDEAEPSKGSISLLSPVGLALLGKFVGDEIVVDAPRGKINYEIVSIAFHGPIAAADD</sequence>
<feature type="chain" id="PRO_1000202850" description="Transcription elongation factor GreA">
    <location>
        <begin position="1"/>
        <end position="164"/>
    </location>
</feature>
<feature type="coiled-coil region" evidence="1">
    <location>
        <begin position="12"/>
        <end position="38"/>
    </location>
</feature>
<accession>C4XLU8</accession>
<gene>
    <name evidence="1" type="primary">greA</name>
    <name type="ordered locus">DMR_11950</name>
</gene>